<accession>B4HND9</accession>
<reference key="1">
    <citation type="journal article" date="2007" name="Nature">
        <title>Evolution of genes and genomes on the Drosophila phylogeny.</title>
        <authorList>
            <consortium name="Drosophila 12 genomes consortium"/>
        </authorList>
    </citation>
    <scope>NUCLEOTIDE SEQUENCE [LARGE SCALE GENOMIC DNA]</scope>
    <source>
        <strain>Rob3c / Tucson 14021-0248.25</strain>
    </source>
</reference>
<comment type="function">
    <text evidence="1 2 3">Regulatory component of the Usp12-46 deubiquitylase complex (By similarity). activates deubiquitination by increasing the catalytic turnover without increasing the affinity of deubiquitinating enzymes for the substrate (By similarity). The complex deubiquitylates the wg/wingless-signaling receptor arr/arrow, which stabilizes the receptor and increases its concentration at the cell surface; this enhances the sensitivity of cells to wg/wingless-signal stimulation. This increases the amplitude and spatial range of the signaling response to the wg/wingless morphogen gradient, facilitating the precise concentration-dependent regulation of its target genes. Together with Wdr20 and Usp12-46 required for wg/wingless-mediated signaling in the wing imaginal disc and for wg/wingless-dependent regulation of intestinal stem cell proliferation (By similarity).</text>
</comment>
<comment type="subunit">
    <text evidence="2">Catalytic component of the Usp12-46 deubiquitylase complex consisting of Usp12-46, Wdr20 and Uaf1; regulatory subunit that, together wtih Wdr20, stabilizes Usp12-46. The Usp12-46 deubiquitylase complex associates with arr/arrow; the interaction leads to deubiquitination and stabilization of arr/arrow.</text>
</comment>
<comment type="similarity">
    <text evidence="6">Belongs to the WD repeat WDR48 family.</text>
</comment>
<gene>
    <name evidence="2" type="primary">Uaf1</name>
    <name type="ORF">GM20456</name>
</gene>
<keyword id="KW-1185">Reference proteome</keyword>
<keyword id="KW-0677">Repeat</keyword>
<keyword id="KW-0833">Ubl conjugation pathway</keyword>
<keyword id="KW-0853">WD repeat</keyword>
<dbReference type="EMBL" id="CH480816">
    <property type="protein sequence ID" value="EDW47375.1"/>
    <property type="molecule type" value="Genomic_DNA"/>
</dbReference>
<dbReference type="SMR" id="B4HND9"/>
<dbReference type="STRING" id="7238.B4HND9"/>
<dbReference type="EnsemblMetazoa" id="FBtr0203441">
    <property type="protein sequence ID" value="FBpp0201933"/>
    <property type="gene ID" value="FBgn0175338"/>
</dbReference>
<dbReference type="EnsemblMetazoa" id="XM_002033326.2">
    <property type="protein sequence ID" value="XP_002033362.1"/>
    <property type="gene ID" value="LOC6608628"/>
</dbReference>
<dbReference type="GeneID" id="6608628"/>
<dbReference type="KEGG" id="dse:6608628"/>
<dbReference type="HOGENOM" id="CLU_014960_0_1_1"/>
<dbReference type="OMA" id="IRHYHIL"/>
<dbReference type="OrthoDB" id="14763at7215"/>
<dbReference type="PhylomeDB" id="B4HND9"/>
<dbReference type="Proteomes" id="UP000001292">
    <property type="component" value="Unassembled WGS sequence"/>
</dbReference>
<dbReference type="GO" id="GO:0043130">
    <property type="term" value="F:ubiquitin binding"/>
    <property type="evidence" value="ECO:0007669"/>
    <property type="project" value="TreeGrafter"/>
</dbReference>
<dbReference type="GO" id="GO:0000724">
    <property type="term" value="P:double-strand break repair via homologous recombination"/>
    <property type="evidence" value="ECO:0007669"/>
    <property type="project" value="TreeGrafter"/>
</dbReference>
<dbReference type="CDD" id="cd17041">
    <property type="entry name" value="Ubl_WDR48"/>
    <property type="match status" value="1"/>
</dbReference>
<dbReference type="CDD" id="cd00200">
    <property type="entry name" value="WD40"/>
    <property type="match status" value="1"/>
</dbReference>
<dbReference type="FunFam" id="2.130.10.10:FF:000543">
    <property type="entry name" value="WD repeat-containing protein 48 homolog"/>
    <property type="match status" value="1"/>
</dbReference>
<dbReference type="FunFam" id="2.130.10.10:FF:000984">
    <property type="entry name" value="WD repeat-containing protein 48 homolog"/>
    <property type="match status" value="1"/>
</dbReference>
<dbReference type="Gene3D" id="2.130.10.10">
    <property type="entry name" value="YVTN repeat-like/Quinoprotein amine dehydrogenase"/>
    <property type="match status" value="2"/>
</dbReference>
<dbReference type="InterPro" id="IPR020472">
    <property type="entry name" value="G-protein_beta_WD-40_rep"/>
</dbReference>
<dbReference type="InterPro" id="IPR015943">
    <property type="entry name" value="WD40/YVTN_repeat-like_dom_sf"/>
</dbReference>
<dbReference type="InterPro" id="IPR019775">
    <property type="entry name" value="WD40_repeat_CS"/>
</dbReference>
<dbReference type="InterPro" id="IPR036322">
    <property type="entry name" value="WD40_repeat_dom_sf"/>
</dbReference>
<dbReference type="InterPro" id="IPR001680">
    <property type="entry name" value="WD40_rpt"/>
</dbReference>
<dbReference type="InterPro" id="IPR051246">
    <property type="entry name" value="WDR48"/>
</dbReference>
<dbReference type="InterPro" id="IPR021772">
    <property type="entry name" value="WDR48/Bun107"/>
</dbReference>
<dbReference type="PANTHER" id="PTHR19862">
    <property type="entry name" value="WD REPEAT-CONTAINING PROTEIN 48"/>
    <property type="match status" value="1"/>
</dbReference>
<dbReference type="PANTHER" id="PTHR19862:SF14">
    <property type="entry name" value="WD REPEAT-CONTAINING PROTEIN 48"/>
    <property type="match status" value="1"/>
</dbReference>
<dbReference type="Pfam" id="PF11816">
    <property type="entry name" value="DUF3337"/>
    <property type="match status" value="1"/>
</dbReference>
<dbReference type="Pfam" id="PF00400">
    <property type="entry name" value="WD40"/>
    <property type="match status" value="6"/>
</dbReference>
<dbReference type="PRINTS" id="PR00320">
    <property type="entry name" value="GPROTEINBRPT"/>
</dbReference>
<dbReference type="SMART" id="SM00320">
    <property type="entry name" value="WD40"/>
    <property type="match status" value="8"/>
</dbReference>
<dbReference type="SUPFAM" id="SSF50978">
    <property type="entry name" value="WD40 repeat-like"/>
    <property type="match status" value="1"/>
</dbReference>
<dbReference type="PROSITE" id="PS00678">
    <property type="entry name" value="WD_REPEATS_1"/>
    <property type="match status" value="4"/>
</dbReference>
<dbReference type="PROSITE" id="PS50082">
    <property type="entry name" value="WD_REPEATS_2"/>
    <property type="match status" value="5"/>
</dbReference>
<dbReference type="PROSITE" id="PS50294">
    <property type="entry name" value="WD_REPEATS_REGION"/>
    <property type="match status" value="5"/>
</dbReference>
<evidence type="ECO:0000250" key="1"/>
<evidence type="ECO:0000250" key="2">
    <source>
        <dbReference type="UniProtKB" id="Q1LZ08"/>
    </source>
</evidence>
<evidence type="ECO:0000250" key="3">
    <source>
        <dbReference type="UniProtKB" id="Q8TAF3"/>
    </source>
</evidence>
<evidence type="ECO:0000255" key="4"/>
<evidence type="ECO:0000256" key="5">
    <source>
        <dbReference type="SAM" id="MobiDB-lite"/>
    </source>
</evidence>
<evidence type="ECO:0000305" key="6"/>
<evidence type="ECO:0000312" key="7">
    <source>
        <dbReference type="Proteomes" id="UP000001292"/>
    </source>
</evidence>
<organism evidence="7">
    <name type="scientific">Drosophila sechellia</name>
    <name type="common">Fruit fly</name>
    <dbReference type="NCBI Taxonomy" id="7238"/>
    <lineage>
        <taxon>Eukaryota</taxon>
        <taxon>Metazoa</taxon>
        <taxon>Ecdysozoa</taxon>
        <taxon>Arthropoda</taxon>
        <taxon>Hexapoda</taxon>
        <taxon>Insecta</taxon>
        <taxon>Pterygota</taxon>
        <taxon>Neoptera</taxon>
        <taxon>Endopterygota</taxon>
        <taxon>Diptera</taxon>
        <taxon>Brachycera</taxon>
        <taxon>Muscomorpha</taxon>
        <taxon>Ephydroidea</taxon>
        <taxon>Drosophilidae</taxon>
        <taxon>Drosophila</taxon>
        <taxon>Sophophora</taxon>
    </lineage>
</organism>
<name>WDR48_DROSE</name>
<sequence>MLTHKTCQARKKMQVSFVIRDAEEKQHRNGVNALQLDANNGKLYSAGRDAIIRVWNTRTDSSEKYIQSMEHHNDWVNDIVLCCNGRNLISASCDTTVKVWNAQKGFCMSTLRTHRDYVQALAYAKDREQVASAGLDKAIFLWDVNTLTALTASNNTVTTSSLTGSKDSIYSLAMNPSGTVIVSGSTENILRIWDPRTCMRIMKLRGHTENVRCLVVSPDGNQVVSGSSDGTIKVWNLGQQRCVQTIHVHKEGVWSLLMSENFQYIISGSRDRNIIVTEMRNPSNKTLVCEEQAPVLSLGYNIDKTGVWATTWNSDIRCWKLPMYDRCTLNSSGGMDAQWTQGGTEVACIKGGAAIKECAVLNDKRYIITKDSQDQVVVYDVLRVVKKEQLGAVDYEAEVKKRNKQVYIPNWFTVDLKTGMPTIVLGQEEVDCFSAWVSIEAGLPECVDPTTEIKINYGKLLLEALLEYWTPPHSIPPNEMEPDMHGNGYFQVPKHTPVIFSEVGGRTVCRLLVRDAAGDSESTLLHETAPQWVTDVVIEKNIPKFLKIPFFLQPHPQMTKPERTKKDRLVANEFIQCRKVCEHVLEKVLNAETTPSGGNANNSLQNSQSDANSEGSQLPAEERIELWCNDVVVDPNMDLRTVRHFIWKQSTDLTFQYKTKQNFNYDGSIGDSLERVTRKY</sequence>
<proteinExistence type="inferred from homology"/>
<feature type="chain" id="PRO_0000378985" description="WD repeat-containing protein 48 homolog">
    <location>
        <begin position="1"/>
        <end position="680"/>
    </location>
</feature>
<feature type="repeat" description="WD 1" evidence="4">
    <location>
        <begin position="26"/>
        <end position="65"/>
    </location>
</feature>
<feature type="repeat" description="WD 2" evidence="4">
    <location>
        <begin position="71"/>
        <end position="110"/>
    </location>
</feature>
<feature type="repeat" description="WD 3" evidence="4">
    <location>
        <begin position="113"/>
        <end position="152"/>
    </location>
</feature>
<feature type="repeat" description="WD 4" evidence="4">
    <location>
        <begin position="164"/>
        <end position="203"/>
    </location>
</feature>
<feature type="repeat" description="WD 5" evidence="4">
    <location>
        <begin position="206"/>
        <end position="245"/>
    </location>
</feature>
<feature type="repeat" description="WD 6" evidence="4">
    <location>
        <begin position="248"/>
        <end position="287"/>
    </location>
</feature>
<feature type="repeat" description="WD 7" evidence="4">
    <location>
        <begin position="290"/>
        <end position="329"/>
    </location>
</feature>
<feature type="repeat" description="WD 8" evidence="4">
    <location>
        <begin position="350"/>
        <end position="389"/>
    </location>
</feature>
<feature type="region of interest" description="Disordered" evidence="5">
    <location>
        <begin position="592"/>
        <end position="616"/>
    </location>
</feature>
<protein>
    <recommendedName>
        <fullName>WD repeat-containing protein 48 homolog</fullName>
    </recommendedName>
</protein>